<accession>Q3BWT0</accession>
<name>TDH_XANE5</name>
<dbReference type="EC" id="1.1.1.103" evidence="1"/>
<dbReference type="EMBL" id="AM039952">
    <property type="protein sequence ID" value="CAJ22683.1"/>
    <property type="molecule type" value="Genomic_DNA"/>
</dbReference>
<dbReference type="SMR" id="Q3BWT0"/>
<dbReference type="STRING" id="456327.BJD11_17475"/>
<dbReference type="KEGG" id="xcv:XCV1052"/>
<dbReference type="eggNOG" id="COG1063">
    <property type="taxonomic scope" value="Bacteria"/>
</dbReference>
<dbReference type="HOGENOM" id="CLU_026673_11_0_6"/>
<dbReference type="UniPathway" id="UPA00046">
    <property type="reaction ID" value="UER00505"/>
</dbReference>
<dbReference type="Proteomes" id="UP000007069">
    <property type="component" value="Chromosome"/>
</dbReference>
<dbReference type="GO" id="GO:0005737">
    <property type="term" value="C:cytoplasm"/>
    <property type="evidence" value="ECO:0007669"/>
    <property type="project" value="UniProtKB-SubCell"/>
</dbReference>
<dbReference type="GO" id="GO:0008743">
    <property type="term" value="F:L-threonine 3-dehydrogenase activity"/>
    <property type="evidence" value="ECO:0007669"/>
    <property type="project" value="UniProtKB-UniRule"/>
</dbReference>
<dbReference type="GO" id="GO:0008270">
    <property type="term" value="F:zinc ion binding"/>
    <property type="evidence" value="ECO:0007669"/>
    <property type="project" value="UniProtKB-UniRule"/>
</dbReference>
<dbReference type="GO" id="GO:0019518">
    <property type="term" value="P:L-threonine catabolic process to glycine"/>
    <property type="evidence" value="ECO:0007669"/>
    <property type="project" value="UniProtKB-UniPathway"/>
</dbReference>
<dbReference type="Gene3D" id="3.90.180.10">
    <property type="entry name" value="Medium-chain alcohol dehydrogenases, catalytic domain"/>
    <property type="match status" value="1"/>
</dbReference>
<dbReference type="Gene3D" id="3.40.50.720">
    <property type="entry name" value="NAD(P)-binding Rossmann-like Domain"/>
    <property type="match status" value="1"/>
</dbReference>
<dbReference type="HAMAP" id="MF_00627">
    <property type="entry name" value="Thr_dehydrog"/>
    <property type="match status" value="1"/>
</dbReference>
<dbReference type="InterPro" id="IPR013149">
    <property type="entry name" value="ADH-like_C"/>
</dbReference>
<dbReference type="InterPro" id="IPR013154">
    <property type="entry name" value="ADH-like_N"/>
</dbReference>
<dbReference type="InterPro" id="IPR002328">
    <property type="entry name" value="ADH_Zn_CS"/>
</dbReference>
<dbReference type="InterPro" id="IPR011032">
    <property type="entry name" value="GroES-like_sf"/>
</dbReference>
<dbReference type="InterPro" id="IPR004627">
    <property type="entry name" value="L-Threonine_3-DHase"/>
</dbReference>
<dbReference type="InterPro" id="IPR036291">
    <property type="entry name" value="NAD(P)-bd_dom_sf"/>
</dbReference>
<dbReference type="InterPro" id="IPR020843">
    <property type="entry name" value="PKS_ER"/>
</dbReference>
<dbReference type="InterPro" id="IPR050129">
    <property type="entry name" value="Zn_alcohol_dh"/>
</dbReference>
<dbReference type="NCBIfam" id="NF003808">
    <property type="entry name" value="PRK05396.1"/>
    <property type="match status" value="1"/>
</dbReference>
<dbReference type="NCBIfam" id="TIGR00692">
    <property type="entry name" value="tdh"/>
    <property type="match status" value="1"/>
</dbReference>
<dbReference type="PANTHER" id="PTHR43401">
    <property type="entry name" value="L-THREONINE 3-DEHYDROGENASE"/>
    <property type="match status" value="1"/>
</dbReference>
<dbReference type="PANTHER" id="PTHR43401:SF2">
    <property type="entry name" value="L-THREONINE 3-DEHYDROGENASE"/>
    <property type="match status" value="1"/>
</dbReference>
<dbReference type="Pfam" id="PF08240">
    <property type="entry name" value="ADH_N"/>
    <property type="match status" value="1"/>
</dbReference>
<dbReference type="Pfam" id="PF00107">
    <property type="entry name" value="ADH_zinc_N"/>
    <property type="match status" value="1"/>
</dbReference>
<dbReference type="SMART" id="SM00829">
    <property type="entry name" value="PKS_ER"/>
    <property type="match status" value="1"/>
</dbReference>
<dbReference type="SUPFAM" id="SSF50129">
    <property type="entry name" value="GroES-like"/>
    <property type="match status" value="1"/>
</dbReference>
<dbReference type="SUPFAM" id="SSF51735">
    <property type="entry name" value="NAD(P)-binding Rossmann-fold domains"/>
    <property type="match status" value="1"/>
</dbReference>
<dbReference type="PROSITE" id="PS00059">
    <property type="entry name" value="ADH_ZINC"/>
    <property type="match status" value="1"/>
</dbReference>
<feature type="chain" id="PRO_1000051667" description="L-threonine 3-dehydrogenase">
    <location>
        <begin position="1"/>
        <end position="340"/>
    </location>
</feature>
<feature type="active site" description="Charge relay system" evidence="1">
    <location>
        <position position="40"/>
    </location>
</feature>
<feature type="active site" description="Charge relay system" evidence="1">
    <location>
        <position position="43"/>
    </location>
</feature>
<feature type="binding site" evidence="1">
    <location>
        <position position="38"/>
    </location>
    <ligand>
        <name>Zn(2+)</name>
        <dbReference type="ChEBI" id="CHEBI:29105"/>
        <label>1</label>
        <note>catalytic</note>
    </ligand>
</feature>
<feature type="binding site" evidence="1">
    <location>
        <position position="63"/>
    </location>
    <ligand>
        <name>Zn(2+)</name>
        <dbReference type="ChEBI" id="CHEBI:29105"/>
        <label>1</label>
        <note>catalytic</note>
    </ligand>
</feature>
<feature type="binding site" evidence="1">
    <location>
        <position position="64"/>
    </location>
    <ligand>
        <name>Zn(2+)</name>
        <dbReference type="ChEBI" id="CHEBI:29105"/>
        <label>1</label>
        <note>catalytic</note>
    </ligand>
</feature>
<feature type="binding site" evidence="1">
    <location>
        <position position="93"/>
    </location>
    <ligand>
        <name>Zn(2+)</name>
        <dbReference type="ChEBI" id="CHEBI:29105"/>
        <label>2</label>
    </ligand>
</feature>
<feature type="binding site" evidence="1">
    <location>
        <position position="96"/>
    </location>
    <ligand>
        <name>Zn(2+)</name>
        <dbReference type="ChEBI" id="CHEBI:29105"/>
        <label>2</label>
    </ligand>
</feature>
<feature type="binding site" evidence="1">
    <location>
        <position position="99"/>
    </location>
    <ligand>
        <name>Zn(2+)</name>
        <dbReference type="ChEBI" id="CHEBI:29105"/>
        <label>2</label>
    </ligand>
</feature>
<feature type="binding site" evidence="1">
    <location>
        <position position="107"/>
    </location>
    <ligand>
        <name>Zn(2+)</name>
        <dbReference type="ChEBI" id="CHEBI:29105"/>
        <label>2</label>
    </ligand>
</feature>
<feature type="binding site" evidence="1">
    <location>
        <position position="175"/>
    </location>
    <ligand>
        <name>NAD(+)</name>
        <dbReference type="ChEBI" id="CHEBI:57540"/>
    </ligand>
</feature>
<feature type="binding site" evidence="1">
    <location>
        <position position="195"/>
    </location>
    <ligand>
        <name>NAD(+)</name>
        <dbReference type="ChEBI" id="CHEBI:57540"/>
    </ligand>
</feature>
<feature type="binding site" evidence="1">
    <location>
        <position position="200"/>
    </location>
    <ligand>
        <name>NAD(+)</name>
        <dbReference type="ChEBI" id="CHEBI:57540"/>
    </ligand>
</feature>
<feature type="binding site" evidence="1">
    <location>
        <begin position="261"/>
        <end position="263"/>
    </location>
    <ligand>
        <name>NAD(+)</name>
        <dbReference type="ChEBI" id="CHEBI:57540"/>
    </ligand>
</feature>
<feature type="binding site" evidence="1">
    <location>
        <begin position="285"/>
        <end position="286"/>
    </location>
    <ligand>
        <name>NAD(+)</name>
        <dbReference type="ChEBI" id="CHEBI:57540"/>
    </ligand>
</feature>
<feature type="site" description="Important for catalytic activity for the proton relay mechanism but does not participate directly in the coordination of zinc atom" evidence="1">
    <location>
        <position position="148"/>
    </location>
</feature>
<proteinExistence type="inferred from homology"/>
<gene>
    <name evidence="1" type="primary">tdh</name>
    <name type="ordered locus">XCV1052</name>
</gene>
<keyword id="KW-0963">Cytoplasm</keyword>
<keyword id="KW-0479">Metal-binding</keyword>
<keyword id="KW-0520">NAD</keyword>
<keyword id="KW-0560">Oxidoreductase</keyword>
<keyword id="KW-0862">Zinc</keyword>
<evidence type="ECO:0000255" key="1">
    <source>
        <dbReference type="HAMAP-Rule" id="MF_00627"/>
    </source>
</evidence>
<sequence>MKALVKREANKGIWLEQVPVPTPGPNEVLIKLEKTAICGTDLHIYLWDEWSQRTIRPGLTIGHEFVGRVAELGSAVTGYQVGQRVSAEGHIVCGHCRNCRGGRPHLCPNTVGIGVNVNGAFAEYMVMPASNLWLIPDQIPSELAAFFDPYGNAAHCALEFDVIGEDVLITGAGPIGIIAAGICKHIGARNVVVTDVNDFRLKLAADMGATRVVNVSKTSLKDVMADLHMEGFDVGLEMSGNPRAFNDMLDCMYHGGKIAMLGIMPRGAGCDWDKIIFKGLTVQGIYGRKMYETWYKMTQLVLSGFPLHKVLTHQLPIDDFQKGFDLMEEGKAGKVVLSWN</sequence>
<reference key="1">
    <citation type="journal article" date="2005" name="J. Bacteriol.">
        <title>Insights into genome plasticity and pathogenicity of the plant pathogenic Bacterium Xanthomonas campestris pv. vesicatoria revealed by the complete genome sequence.</title>
        <authorList>
            <person name="Thieme F."/>
            <person name="Koebnik R."/>
            <person name="Bekel T."/>
            <person name="Berger C."/>
            <person name="Boch J."/>
            <person name="Buettner D."/>
            <person name="Caldana C."/>
            <person name="Gaigalat L."/>
            <person name="Goesmann A."/>
            <person name="Kay S."/>
            <person name="Kirchner O."/>
            <person name="Lanz C."/>
            <person name="Linke B."/>
            <person name="McHardy A.C."/>
            <person name="Meyer F."/>
            <person name="Mittenhuber G."/>
            <person name="Nies D.H."/>
            <person name="Niesbach-Kloesgen U."/>
            <person name="Patschkowski T."/>
            <person name="Rueckert C."/>
            <person name="Rupp O."/>
            <person name="Schneiker S."/>
            <person name="Schuster S.C."/>
            <person name="Vorhoelter F.J."/>
            <person name="Weber E."/>
            <person name="Puehler A."/>
            <person name="Bonas U."/>
            <person name="Bartels D."/>
            <person name="Kaiser O."/>
        </authorList>
    </citation>
    <scope>NUCLEOTIDE SEQUENCE [LARGE SCALE GENOMIC DNA]</scope>
    <source>
        <strain>85-10</strain>
    </source>
</reference>
<protein>
    <recommendedName>
        <fullName evidence="1">L-threonine 3-dehydrogenase</fullName>
        <shortName evidence="1">TDH</shortName>
        <ecNumber evidence="1">1.1.1.103</ecNumber>
    </recommendedName>
</protein>
<comment type="function">
    <text evidence="1">Catalyzes the NAD(+)-dependent oxidation of L-threonine to 2-amino-3-ketobutyrate.</text>
</comment>
<comment type="catalytic activity">
    <reaction evidence="1">
        <text>L-threonine + NAD(+) = (2S)-2-amino-3-oxobutanoate + NADH + H(+)</text>
        <dbReference type="Rhea" id="RHEA:13161"/>
        <dbReference type="ChEBI" id="CHEBI:15378"/>
        <dbReference type="ChEBI" id="CHEBI:57540"/>
        <dbReference type="ChEBI" id="CHEBI:57926"/>
        <dbReference type="ChEBI" id="CHEBI:57945"/>
        <dbReference type="ChEBI" id="CHEBI:78948"/>
        <dbReference type="EC" id="1.1.1.103"/>
    </reaction>
</comment>
<comment type="cofactor">
    <cofactor evidence="1">
        <name>Zn(2+)</name>
        <dbReference type="ChEBI" id="CHEBI:29105"/>
    </cofactor>
    <text evidence="1">Binds 2 Zn(2+) ions per subunit.</text>
</comment>
<comment type="pathway">
    <text evidence="1">Amino-acid degradation; L-threonine degradation via oxydo-reductase pathway; glycine from L-threonine: step 1/2.</text>
</comment>
<comment type="subunit">
    <text evidence="1">Homotetramer.</text>
</comment>
<comment type="subcellular location">
    <subcellularLocation>
        <location evidence="1">Cytoplasm</location>
    </subcellularLocation>
</comment>
<comment type="similarity">
    <text evidence="1">Belongs to the zinc-containing alcohol dehydrogenase family.</text>
</comment>
<organism>
    <name type="scientific">Xanthomonas euvesicatoria pv. vesicatoria (strain 85-10)</name>
    <name type="common">Xanthomonas campestris pv. vesicatoria</name>
    <dbReference type="NCBI Taxonomy" id="316273"/>
    <lineage>
        <taxon>Bacteria</taxon>
        <taxon>Pseudomonadati</taxon>
        <taxon>Pseudomonadota</taxon>
        <taxon>Gammaproteobacteria</taxon>
        <taxon>Lysobacterales</taxon>
        <taxon>Lysobacteraceae</taxon>
        <taxon>Xanthomonas</taxon>
    </lineage>
</organism>